<feature type="peptide" id="PRO_0000451988" description="Lambda-theraphotoxin-Ec2c">
    <location>
        <begin position="1"/>
        <end position="29"/>
    </location>
</feature>
<feature type="disulfide bond" evidence="1">
    <location>
        <begin position="2"/>
        <end position="16"/>
    </location>
</feature>
<feature type="disulfide bond" evidence="1">
    <location>
        <begin position="9"/>
        <end position="21"/>
    </location>
</feature>
<feature type="disulfide bond" evidence="1">
    <location>
        <begin position="15"/>
        <end position="25"/>
    </location>
</feature>
<organism>
    <name type="scientific">Eucratoscelus constrictus</name>
    <name type="common">African red-rump baboon spider</name>
    <dbReference type="NCBI Taxonomy" id="2771863"/>
    <lineage>
        <taxon>Eukaryota</taxon>
        <taxon>Metazoa</taxon>
        <taxon>Ecdysozoa</taxon>
        <taxon>Arthropoda</taxon>
        <taxon>Chelicerata</taxon>
        <taxon>Arachnida</taxon>
        <taxon>Araneae</taxon>
        <taxon>Mygalomorphae</taxon>
        <taxon>Theraphosidae</taxon>
        <taxon>Eucratoscelus</taxon>
    </lineage>
</organism>
<keyword id="KW-1221">Calcium-activated potassium channel impairing toxin</keyword>
<keyword id="KW-0903">Direct protein sequencing</keyword>
<keyword id="KW-1015">Disulfide bond</keyword>
<keyword id="KW-0872">Ion channel impairing toxin</keyword>
<keyword id="KW-0528">Neurotoxin</keyword>
<keyword id="KW-0632">Potassium channel impairing toxin</keyword>
<keyword id="KW-0964">Secreted</keyword>
<keyword id="KW-0800">Toxin</keyword>
<dbReference type="SMR" id="P0DQO7"/>
<dbReference type="GO" id="GO:0005576">
    <property type="term" value="C:extracellular region"/>
    <property type="evidence" value="ECO:0007669"/>
    <property type="project" value="UniProtKB-SubCell"/>
</dbReference>
<dbReference type="GO" id="GO:0015459">
    <property type="term" value="F:potassium channel regulator activity"/>
    <property type="evidence" value="ECO:0007669"/>
    <property type="project" value="UniProtKB-KW"/>
</dbReference>
<dbReference type="GO" id="GO:0090729">
    <property type="term" value="F:toxin activity"/>
    <property type="evidence" value="ECO:0007669"/>
    <property type="project" value="UniProtKB-KW"/>
</dbReference>
<dbReference type="SUPFAM" id="SSF57059">
    <property type="entry name" value="omega toxin-like"/>
    <property type="match status" value="1"/>
</dbReference>
<reference key="1">
    <citation type="journal article" date="2011" name="Mol. Pharmacol.">
        <title>A novel family of insect-selective peptide neurotoxins targeting insect large-conductance calcium-activated K+ channels isolated from the venom of the theraphosid spider Eucratoscelus constrictus.</title>
        <authorList>
            <person name="Windley M.J."/>
            <person name="Escoubas P."/>
            <person name="Valenzuela S.M."/>
            <person name="Nicholson G.M."/>
        </authorList>
    </citation>
    <scope>PROTEIN SEQUENCE</scope>
    <scope>FUNCTION</scope>
    <scope>SUBCELLULAR LOCATION</scope>
    <scope>MASS SPECTROMETRY</scope>
    <scope>TOXIC DOSE</scope>
    <source>
        <tissue>Venom</tissue>
    </source>
</reference>
<protein>
    <recommendedName>
        <fullName evidence="4">Lambda-theraphotoxin-Ec2c</fullName>
        <shortName evidence="4">Lambda-TRTX-Ec2c</shortName>
    </recommendedName>
    <alternativeName>
        <fullName evidence="3">Kappa-theraphotoxin-Ec2c</fullName>
        <shortName evidence="3">Kappa-TRTX-Ec2c</shortName>
    </alternativeName>
</protein>
<accession>P0DQO7</accession>
<comment type="function">
    <text evidence="2 5">Both insecticidal and vertebrate neurotoxin that potently blocks insect calcium-activated potassium (BKCa) channels (Slo-type) in cockroach dorsal unpaired median (DUM) neurons (IC(50)=24.6 nM) (PubMed:21447641). This occurs in the absence of any shifts in the voltage dependence of activation (PubMed:21447641). May interact with the turret and/or loop region of the external entrance to the channel and does not project deeply into the pore of the channel (Probable). Also shows toxicity to mice by introcerebroventicular injection (PubMed:21447641).</text>
</comment>
<comment type="subcellular location">
    <subcellularLocation>
        <location evidence="2">Secreted</location>
    </subcellularLocation>
</comment>
<comment type="tissue specificity">
    <text evidence="5">Expressed by the venom gland.</text>
</comment>
<comment type="domain">
    <text evidence="1">The presence of a 'disulfide through disulfide knot' structurally defines this protein as a knottin.</text>
</comment>
<comment type="mass spectrometry" mass="3627.16" method="MALDI" evidence="2">
    <text>Monoisotopic mass.</text>
</comment>
<comment type="toxic dose">
    <text evidence="2">Intrathoracical injection into juvenile crickets (Gryllus bimaculatus) of this toxin (at a dose of ca. 1100 pmol/g (4 ug/g)) causes a rapid insecticidal activity, with complete paralysis within 5 minutes and death within 15 minutes.</text>
</comment>
<comment type="toxic dose">
    <text evidence="2">Intracerebroventricular injection into mice of this toxin (at a dose of 1.8 ug per mice) causes strong neurotoxicity symptoms, including convulsions, tonic paralysis, general ataxia, extension of legs and toes, tail erection, and respiratory paralysis resulting in very marked cyanosis of the animal. These symptoms are reversible.</text>
</comment>
<comment type="miscellaneous">
    <text evidence="2">Negative results: At concentrations up to 330 nM, does not show activity on transient 'A-type' Kv, delayed-rectifier Kv, voltage-gated sodium channel (Nav) and both HVA and M-LVA Cav channels in cockroach DUM neurons.</text>
</comment>
<comment type="similarity">
    <text evidence="4">Belongs to the neurotoxin 30 (phrixotoxin) family.</text>
</comment>
<comment type="caution">
    <text evidence="4">This toxin has the prefix lambda in its name (instead of kappa), since lambda is the Greek letter attributed to calcium-activated potassium (KCa) channel impairing toxins (according to the nomenclature of King et al., 2008).</text>
</comment>
<name>TX2C_EUCCO</name>
<evidence type="ECO:0000250" key="1">
    <source>
        <dbReference type="UniProtKB" id="P83476"/>
    </source>
</evidence>
<evidence type="ECO:0000269" key="2">
    <source>
    </source>
</evidence>
<evidence type="ECO:0000303" key="3">
    <source>
    </source>
</evidence>
<evidence type="ECO:0000305" key="4"/>
<evidence type="ECO:0000305" key="5">
    <source>
    </source>
</evidence>
<proteinExistence type="evidence at protein level"/>
<sequence length="29" mass="3636">YCQFKMWTCDSERKCCEDMVCRLWCKLNL</sequence>